<sequence>MSVDISTVKRVAHLARIAVSEDDAERMTGELNAILGFVEQLNEVDVEGIEPMTSVTPMKMRMREDKVTDGGIAAAVVANAPVTEDNFFVVPKVVE</sequence>
<keyword id="KW-0067">ATP-binding</keyword>
<keyword id="KW-0436">Ligase</keyword>
<keyword id="KW-0547">Nucleotide-binding</keyword>
<keyword id="KW-0648">Protein biosynthesis</keyword>
<name>GATC_BRUME</name>
<evidence type="ECO:0000255" key="1">
    <source>
        <dbReference type="HAMAP-Rule" id="MF_00122"/>
    </source>
</evidence>
<feature type="chain" id="PRO_0000105283" description="Glutamyl-tRNA(Gln) amidotransferase subunit C">
    <location>
        <begin position="1"/>
        <end position="95"/>
    </location>
</feature>
<reference key="1">
    <citation type="journal article" date="2002" name="Proc. Natl. Acad. Sci. U.S.A.">
        <title>The genome sequence of the facultative intracellular pathogen Brucella melitensis.</title>
        <authorList>
            <person name="DelVecchio V.G."/>
            <person name="Kapatral V."/>
            <person name="Redkar R.J."/>
            <person name="Patra G."/>
            <person name="Mujer C."/>
            <person name="Los T."/>
            <person name="Ivanova N."/>
            <person name="Anderson I."/>
            <person name="Bhattacharyya A."/>
            <person name="Lykidis A."/>
            <person name="Reznik G."/>
            <person name="Jablonski L."/>
            <person name="Larsen N."/>
            <person name="D'Souza M."/>
            <person name="Bernal A."/>
            <person name="Mazur M."/>
            <person name="Goltsman E."/>
            <person name="Selkov E."/>
            <person name="Elzer P.H."/>
            <person name="Hagius S."/>
            <person name="O'Callaghan D."/>
            <person name="Letesson J.-J."/>
            <person name="Haselkorn R."/>
            <person name="Kyrpides N.C."/>
            <person name="Overbeek R."/>
        </authorList>
    </citation>
    <scope>NUCLEOTIDE SEQUENCE [LARGE SCALE GENOMIC DNA]</scope>
    <source>
        <strain>ATCC 23456 / CCUG 17765 / NCTC 10094 / 16M</strain>
    </source>
</reference>
<comment type="function">
    <text evidence="1">Allows the formation of correctly charged Asn-tRNA(Asn) or Gln-tRNA(Gln) through the transamidation of misacylated Asp-tRNA(Asn) or Glu-tRNA(Gln) in organisms which lack either or both of asparaginyl-tRNA or glutaminyl-tRNA synthetases. The reaction takes place in the presence of glutamine and ATP through an activated phospho-Asp-tRNA(Asn) or phospho-Glu-tRNA(Gln).</text>
</comment>
<comment type="catalytic activity">
    <reaction evidence="1">
        <text>L-glutamyl-tRNA(Gln) + L-glutamine + ATP + H2O = L-glutaminyl-tRNA(Gln) + L-glutamate + ADP + phosphate + H(+)</text>
        <dbReference type="Rhea" id="RHEA:17521"/>
        <dbReference type="Rhea" id="RHEA-COMP:9681"/>
        <dbReference type="Rhea" id="RHEA-COMP:9684"/>
        <dbReference type="ChEBI" id="CHEBI:15377"/>
        <dbReference type="ChEBI" id="CHEBI:15378"/>
        <dbReference type="ChEBI" id="CHEBI:29985"/>
        <dbReference type="ChEBI" id="CHEBI:30616"/>
        <dbReference type="ChEBI" id="CHEBI:43474"/>
        <dbReference type="ChEBI" id="CHEBI:58359"/>
        <dbReference type="ChEBI" id="CHEBI:78520"/>
        <dbReference type="ChEBI" id="CHEBI:78521"/>
        <dbReference type="ChEBI" id="CHEBI:456216"/>
    </reaction>
</comment>
<comment type="catalytic activity">
    <reaction evidence="1">
        <text>L-aspartyl-tRNA(Asn) + L-glutamine + ATP + H2O = L-asparaginyl-tRNA(Asn) + L-glutamate + ADP + phosphate + 2 H(+)</text>
        <dbReference type="Rhea" id="RHEA:14513"/>
        <dbReference type="Rhea" id="RHEA-COMP:9674"/>
        <dbReference type="Rhea" id="RHEA-COMP:9677"/>
        <dbReference type="ChEBI" id="CHEBI:15377"/>
        <dbReference type="ChEBI" id="CHEBI:15378"/>
        <dbReference type="ChEBI" id="CHEBI:29985"/>
        <dbReference type="ChEBI" id="CHEBI:30616"/>
        <dbReference type="ChEBI" id="CHEBI:43474"/>
        <dbReference type="ChEBI" id="CHEBI:58359"/>
        <dbReference type="ChEBI" id="CHEBI:78515"/>
        <dbReference type="ChEBI" id="CHEBI:78516"/>
        <dbReference type="ChEBI" id="CHEBI:456216"/>
    </reaction>
</comment>
<comment type="subunit">
    <text evidence="1">Heterotrimer of A, B and C subunits.</text>
</comment>
<comment type="similarity">
    <text evidence="1">Belongs to the GatC family.</text>
</comment>
<proteinExistence type="inferred from homology"/>
<organism>
    <name type="scientific">Brucella melitensis biotype 1 (strain ATCC 23456 / CCUG 17765 / NCTC 10094 / 16M)</name>
    <dbReference type="NCBI Taxonomy" id="224914"/>
    <lineage>
        <taxon>Bacteria</taxon>
        <taxon>Pseudomonadati</taxon>
        <taxon>Pseudomonadota</taxon>
        <taxon>Alphaproteobacteria</taxon>
        <taxon>Hyphomicrobiales</taxon>
        <taxon>Brucellaceae</taxon>
        <taxon>Brucella/Ochrobactrum group</taxon>
        <taxon>Brucella</taxon>
    </lineage>
</organism>
<protein>
    <recommendedName>
        <fullName>Glutamyl-tRNA(Gln) amidotransferase subunit C</fullName>
        <shortName>Glu-ADT subunit C</shortName>
        <ecNumber evidence="1">6.3.5.-</ecNumber>
    </recommendedName>
</protein>
<gene>
    <name evidence="1" type="primary">gatC</name>
    <name type="ordered locus">BMEII0674</name>
</gene>
<accession>P64203</accession>
<accession>Q8YC58</accession>
<dbReference type="EC" id="6.3.5.-" evidence="1"/>
<dbReference type="EMBL" id="AE008918">
    <property type="protein sequence ID" value="AAL53916.1"/>
    <property type="molecule type" value="Genomic_DNA"/>
</dbReference>
<dbReference type="PIR" id="AI3593">
    <property type="entry name" value="AI3593"/>
</dbReference>
<dbReference type="RefSeq" id="WP_002966038.1">
    <property type="nucleotide sequence ID" value="NZ_GG703779.1"/>
</dbReference>
<dbReference type="SMR" id="P64203"/>
<dbReference type="GeneID" id="97535281"/>
<dbReference type="KEGG" id="bme:BMEII0674"/>
<dbReference type="KEGG" id="bmel:DK63_2569"/>
<dbReference type="PATRIC" id="fig|224914.52.peg.2693"/>
<dbReference type="eggNOG" id="COG0721">
    <property type="taxonomic scope" value="Bacteria"/>
</dbReference>
<dbReference type="Proteomes" id="UP000000419">
    <property type="component" value="Chromosome II"/>
</dbReference>
<dbReference type="GO" id="GO:0050566">
    <property type="term" value="F:asparaginyl-tRNA synthase (glutamine-hydrolyzing) activity"/>
    <property type="evidence" value="ECO:0007669"/>
    <property type="project" value="RHEA"/>
</dbReference>
<dbReference type="GO" id="GO:0005524">
    <property type="term" value="F:ATP binding"/>
    <property type="evidence" value="ECO:0007669"/>
    <property type="project" value="UniProtKB-KW"/>
</dbReference>
<dbReference type="GO" id="GO:0050567">
    <property type="term" value="F:glutaminyl-tRNA synthase (glutamine-hydrolyzing) activity"/>
    <property type="evidence" value="ECO:0007669"/>
    <property type="project" value="UniProtKB-UniRule"/>
</dbReference>
<dbReference type="GO" id="GO:0070681">
    <property type="term" value="P:glutaminyl-tRNAGln biosynthesis via transamidation"/>
    <property type="evidence" value="ECO:0007669"/>
    <property type="project" value="TreeGrafter"/>
</dbReference>
<dbReference type="GO" id="GO:0006450">
    <property type="term" value="P:regulation of translational fidelity"/>
    <property type="evidence" value="ECO:0007669"/>
    <property type="project" value="InterPro"/>
</dbReference>
<dbReference type="GO" id="GO:0006412">
    <property type="term" value="P:translation"/>
    <property type="evidence" value="ECO:0007669"/>
    <property type="project" value="UniProtKB-UniRule"/>
</dbReference>
<dbReference type="Gene3D" id="1.10.20.60">
    <property type="entry name" value="Glu-tRNAGln amidotransferase C subunit, N-terminal domain"/>
    <property type="match status" value="1"/>
</dbReference>
<dbReference type="HAMAP" id="MF_00122">
    <property type="entry name" value="GatC"/>
    <property type="match status" value="1"/>
</dbReference>
<dbReference type="InterPro" id="IPR036113">
    <property type="entry name" value="Asp/Glu-ADT_sf_sub_c"/>
</dbReference>
<dbReference type="InterPro" id="IPR003837">
    <property type="entry name" value="GatC"/>
</dbReference>
<dbReference type="NCBIfam" id="TIGR00135">
    <property type="entry name" value="gatC"/>
    <property type="match status" value="1"/>
</dbReference>
<dbReference type="PANTHER" id="PTHR15004">
    <property type="entry name" value="GLUTAMYL-TRNA(GLN) AMIDOTRANSFERASE SUBUNIT C, MITOCHONDRIAL"/>
    <property type="match status" value="1"/>
</dbReference>
<dbReference type="PANTHER" id="PTHR15004:SF0">
    <property type="entry name" value="GLUTAMYL-TRNA(GLN) AMIDOTRANSFERASE SUBUNIT C, MITOCHONDRIAL"/>
    <property type="match status" value="1"/>
</dbReference>
<dbReference type="Pfam" id="PF02686">
    <property type="entry name" value="GatC"/>
    <property type="match status" value="1"/>
</dbReference>
<dbReference type="SUPFAM" id="SSF141000">
    <property type="entry name" value="Glu-tRNAGln amidotransferase C subunit"/>
    <property type="match status" value="1"/>
</dbReference>